<proteinExistence type="inferred from homology"/>
<gene>
    <name evidence="1" type="primary">rplL</name>
    <name type="ordered locus">A2cp1_2360</name>
</gene>
<organism>
    <name type="scientific">Anaeromyxobacter dehalogenans (strain 2CP-1 / ATCC BAA-258)</name>
    <dbReference type="NCBI Taxonomy" id="455488"/>
    <lineage>
        <taxon>Bacteria</taxon>
        <taxon>Pseudomonadati</taxon>
        <taxon>Myxococcota</taxon>
        <taxon>Myxococcia</taxon>
        <taxon>Myxococcales</taxon>
        <taxon>Cystobacterineae</taxon>
        <taxon>Anaeromyxobacteraceae</taxon>
        <taxon>Anaeromyxobacter</taxon>
    </lineage>
</organism>
<feature type="chain" id="PRO_1000195763" description="Large ribosomal subunit protein bL12">
    <location>
        <begin position="1"/>
        <end position="125"/>
    </location>
</feature>
<dbReference type="EMBL" id="CP001359">
    <property type="protein sequence ID" value="ACL65698.1"/>
    <property type="molecule type" value="Genomic_DNA"/>
</dbReference>
<dbReference type="RefSeq" id="WP_012526296.1">
    <property type="nucleotide sequence ID" value="NC_011891.1"/>
</dbReference>
<dbReference type="SMR" id="B8JB71"/>
<dbReference type="KEGG" id="acp:A2cp1_2360"/>
<dbReference type="HOGENOM" id="CLU_086499_3_0_7"/>
<dbReference type="Proteomes" id="UP000007089">
    <property type="component" value="Chromosome"/>
</dbReference>
<dbReference type="GO" id="GO:0005737">
    <property type="term" value="C:cytoplasm"/>
    <property type="evidence" value="ECO:0007669"/>
    <property type="project" value="UniProtKB-ARBA"/>
</dbReference>
<dbReference type="GO" id="GO:1990904">
    <property type="term" value="C:ribonucleoprotein complex"/>
    <property type="evidence" value="ECO:0007669"/>
    <property type="project" value="UniProtKB-KW"/>
</dbReference>
<dbReference type="GO" id="GO:0005840">
    <property type="term" value="C:ribosome"/>
    <property type="evidence" value="ECO:0007669"/>
    <property type="project" value="UniProtKB-KW"/>
</dbReference>
<dbReference type="GO" id="GO:0003729">
    <property type="term" value="F:mRNA binding"/>
    <property type="evidence" value="ECO:0007669"/>
    <property type="project" value="TreeGrafter"/>
</dbReference>
<dbReference type="GO" id="GO:0003735">
    <property type="term" value="F:structural constituent of ribosome"/>
    <property type="evidence" value="ECO:0007669"/>
    <property type="project" value="InterPro"/>
</dbReference>
<dbReference type="GO" id="GO:0006412">
    <property type="term" value="P:translation"/>
    <property type="evidence" value="ECO:0007669"/>
    <property type="project" value="UniProtKB-UniRule"/>
</dbReference>
<dbReference type="CDD" id="cd00387">
    <property type="entry name" value="Ribosomal_L7_L12"/>
    <property type="match status" value="1"/>
</dbReference>
<dbReference type="FunFam" id="1.20.5.710:FF:000007">
    <property type="entry name" value="50S ribosomal protein L7/L12"/>
    <property type="match status" value="1"/>
</dbReference>
<dbReference type="FunFam" id="3.30.1390.10:FF:000001">
    <property type="entry name" value="50S ribosomal protein L7/L12"/>
    <property type="match status" value="1"/>
</dbReference>
<dbReference type="Gene3D" id="3.30.1390.10">
    <property type="match status" value="1"/>
</dbReference>
<dbReference type="Gene3D" id="1.20.5.710">
    <property type="entry name" value="Single helix bin"/>
    <property type="match status" value="1"/>
</dbReference>
<dbReference type="HAMAP" id="MF_00368">
    <property type="entry name" value="Ribosomal_bL12"/>
    <property type="match status" value="1"/>
</dbReference>
<dbReference type="InterPro" id="IPR000206">
    <property type="entry name" value="Ribosomal_bL12"/>
</dbReference>
<dbReference type="InterPro" id="IPR013823">
    <property type="entry name" value="Ribosomal_bL12_C"/>
</dbReference>
<dbReference type="InterPro" id="IPR014719">
    <property type="entry name" value="Ribosomal_bL12_C/ClpS-like"/>
</dbReference>
<dbReference type="InterPro" id="IPR008932">
    <property type="entry name" value="Ribosomal_bL12_oligo"/>
</dbReference>
<dbReference type="InterPro" id="IPR036235">
    <property type="entry name" value="Ribosomal_bL12_oligo_N_sf"/>
</dbReference>
<dbReference type="NCBIfam" id="TIGR00855">
    <property type="entry name" value="L12"/>
    <property type="match status" value="1"/>
</dbReference>
<dbReference type="PANTHER" id="PTHR45987">
    <property type="entry name" value="39S RIBOSOMAL PROTEIN L12"/>
    <property type="match status" value="1"/>
</dbReference>
<dbReference type="PANTHER" id="PTHR45987:SF4">
    <property type="entry name" value="LARGE RIBOSOMAL SUBUNIT PROTEIN BL12M"/>
    <property type="match status" value="1"/>
</dbReference>
<dbReference type="Pfam" id="PF00542">
    <property type="entry name" value="Ribosomal_L12"/>
    <property type="match status" value="1"/>
</dbReference>
<dbReference type="Pfam" id="PF16320">
    <property type="entry name" value="Ribosomal_L12_N"/>
    <property type="match status" value="1"/>
</dbReference>
<dbReference type="SUPFAM" id="SSF54736">
    <property type="entry name" value="ClpS-like"/>
    <property type="match status" value="1"/>
</dbReference>
<dbReference type="SUPFAM" id="SSF48300">
    <property type="entry name" value="Ribosomal protein L7/12, oligomerisation (N-terminal) domain"/>
    <property type="match status" value="1"/>
</dbReference>
<comment type="function">
    <text evidence="1">Forms part of the ribosomal stalk which helps the ribosome interact with GTP-bound translation factors. Is thus essential for accurate translation.</text>
</comment>
<comment type="subunit">
    <text evidence="1">Homodimer. Part of the ribosomal stalk of the 50S ribosomal subunit. Forms a multimeric L10(L12)X complex, where L10 forms an elongated spine to which 2 to 4 L12 dimers bind in a sequential fashion. Binds GTP-bound translation factors.</text>
</comment>
<comment type="similarity">
    <text evidence="1">Belongs to the bacterial ribosomal protein bL12 family.</text>
</comment>
<protein>
    <recommendedName>
        <fullName evidence="1">Large ribosomal subunit protein bL12</fullName>
    </recommendedName>
    <alternativeName>
        <fullName evidence="2">50S ribosomal protein L7/L12</fullName>
    </alternativeName>
</protein>
<keyword id="KW-0687">Ribonucleoprotein</keyword>
<keyword id="KW-0689">Ribosomal protein</keyword>
<accession>B8JB71</accession>
<evidence type="ECO:0000255" key="1">
    <source>
        <dbReference type="HAMAP-Rule" id="MF_00368"/>
    </source>
</evidence>
<evidence type="ECO:0000305" key="2"/>
<name>RL7_ANAD2</name>
<sequence>MADLNAIVEQLSGLTIMEAAELVKQLEEKWGVSAAAAPVMVAAGGGAAAAAPVEEKTEFTVVLVDAGANKINVIKEVRAITGLGLKEAKDLVEGAPKEVKAGVAKAESEELKKKLEAAGAKVEVK</sequence>
<reference key="1">
    <citation type="submission" date="2009-01" db="EMBL/GenBank/DDBJ databases">
        <title>Complete sequence of Anaeromyxobacter dehalogenans 2CP-1.</title>
        <authorList>
            <person name="Lucas S."/>
            <person name="Copeland A."/>
            <person name="Lapidus A."/>
            <person name="Glavina del Rio T."/>
            <person name="Dalin E."/>
            <person name="Tice H."/>
            <person name="Bruce D."/>
            <person name="Goodwin L."/>
            <person name="Pitluck S."/>
            <person name="Saunders E."/>
            <person name="Brettin T."/>
            <person name="Detter J.C."/>
            <person name="Han C."/>
            <person name="Larimer F."/>
            <person name="Land M."/>
            <person name="Hauser L."/>
            <person name="Kyrpides N."/>
            <person name="Ovchinnikova G."/>
            <person name="Beliaev A.S."/>
            <person name="Richardson P."/>
        </authorList>
    </citation>
    <scope>NUCLEOTIDE SEQUENCE [LARGE SCALE GENOMIC DNA]</scope>
    <source>
        <strain>2CP-1 / ATCC BAA-258</strain>
    </source>
</reference>